<comment type="function">
    <text evidence="2 3">Ketoreductase; part of the gene cluster that mediates the biosynthesis of andrastins, meroterpenoid compounds that exhibit inhibitory activity against ras farnesyltransferase, suggesting that they could be promising leads for antitumor agents (PubMed:28529508). The first step of the pathway is the synthesis of 3,5-dimethylorsellinic acid (DMOA) by the polyketide synthase adrD via condensation of one acetyl-CoA starter unit with 3 malonyl-CoA units and 2 methylations (By similarity). DMAO is then converted to farnesyl-DMAO by the prenyltransferase adrG (By similarity). The methyltransferase adrK catalyzes the methylation of the carboxyl group of farnesyl-DMAO to farnesyl-DMAO methyl ester which is further converted to epoxyfarnesyl-DMAO methyl ester by the FAD-dependent monooxygenase adrH (By similarity). The terpene cyclase adrI then catalyzes the carbon skeletal rearrangement to generate the andrastin E, the first compound in the pathway having the andrastin scaffold, with the tetracyclic ring system (By similarity). The post-cyclization tailoring enzymes adrF, adrE, adrJ, and adrA, are involved in the conversion of andrastin E into andrastin A. The short chain dehydrogenase adrF is responsible for the oxidation of the C-3 a hydroxyl group of andrastin E to yield the corresponding ketone, andrastin D. The ketoreductase adrE stereoselectively reduces the carbonyl moiety to reverse the stereochemistry of the C-3 position to yield andrastin F. The acetyltransferase adrJ is the acetyltransferase that attaches the acetyl group to the C-3 hydroxyl group of andrastin F to yield andrastin C. Finally, the cytochrome P450 monooxygenase adrA catalyzes two sequential oxidation reactions of the C-23 methyl group, to generate the corresponding alcohol andrastin B, and aldehyde andrastin A (By similarity).</text>
</comment>
<comment type="pathway">
    <text evidence="3">Secondary metabolite biosynthesis; terpenoid biosynthesis.</text>
</comment>
<comment type="disruption phenotype">
    <text evidence="3">Drastically reduces the production of andrastin A.</text>
</comment>
<comment type="similarity">
    <text evidence="5">Belongs to the NAD(P)-dependent epimerase/dehydratase family. Dihydroflavonol-4-reductase subfamily.</text>
</comment>
<feature type="chain" id="PRO_0000446477" description="Ketoreductase adrE">
    <location>
        <begin position="1"/>
        <end position="336"/>
    </location>
</feature>
<feature type="binding site" evidence="1">
    <location>
        <position position="171"/>
    </location>
    <ligand>
        <name>NADP(+)</name>
        <dbReference type="ChEBI" id="CHEBI:58349"/>
    </ligand>
</feature>
<dbReference type="EC" id="1.1.1.-" evidence="6"/>
<dbReference type="EMBL" id="KY349137">
    <property type="protein sequence ID" value="ART41210.1"/>
    <property type="molecule type" value="Genomic_DNA"/>
</dbReference>
<dbReference type="SMR" id="A0A1Y0BRF3"/>
<dbReference type="OMA" id="DECIRIK"/>
<dbReference type="UniPathway" id="UPA00213"/>
<dbReference type="GO" id="GO:0016616">
    <property type="term" value="F:oxidoreductase activity, acting on the CH-OH group of donors, NAD or NADP as acceptor"/>
    <property type="evidence" value="ECO:0007669"/>
    <property type="project" value="TreeGrafter"/>
</dbReference>
<dbReference type="GO" id="GO:0016114">
    <property type="term" value="P:terpenoid biosynthetic process"/>
    <property type="evidence" value="ECO:0007669"/>
    <property type="project" value="UniProtKB-UniPathway"/>
</dbReference>
<dbReference type="Gene3D" id="3.40.50.720">
    <property type="entry name" value="NAD(P)-binding Rossmann-like Domain"/>
    <property type="match status" value="1"/>
</dbReference>
<dbReference type="InterPro" id="IPR001509">
    <property type="entry name" value="Epimerase_deHydtase"/>
</dbReference>
<dbReference type="InterPro" id="IPR036291">
    <property type="entry name" value="NAD(P)-bd_dom_sf"/>
</dbReference>
<dbReference type="InterPro" id="IPR050425">
    <property type="entry name" value="NAD(P)_dehydrat-like"/>
</dbReference>
<dbReference type="PANTHER" id="PTHR10366:SF562">
    <property type="entry name" value="ALDEHYDE REDUCTASE II (AFU_ORTHOLOGUE AFUA_1G11360)"/>
    <property type="match status" value="1"/>
</dbReference>
<dbReference type="PANTHER" id="PTHR10366">
    <property type="entry name" value="NAD DEPENDENT EPIMERASE/DEHYDRATASE"/>
    <property type="match status" value="1"/>
</dbReference>
<dbReference type="Pfam" id="PF01370">
    <property type="entry name" value="Epimerase"/>
    <property type="match status" value="1"/>
</dbReference>
<dbReference type="SUPFAM" id="SSF51735">
    <property type="entry name" value="NAD(P)-binding Rossmann-fold domains"/>
    <property type="match status" value="1"/>
</dbReference>
<keyword id="KW-0560">Oxidoreductase</keyword>
<proteinExistence type="inferred from homology"/>
<name>ADRE_PENRO</name>
<organism>
    <name type="scientific">Penicillium roqueforti</name>
    <dbReference type="NCBI Taxonomy" id="5082"/>
    <lineage>
        <taxon>Eukaryota</taxon>
        <taxon>Fungi</taxon>
        <taxon>Dikarya</taxon>
        <taxon>Ascomycota</taxon>
        <taxon>Pezizomycotina</taxon>
        <taxon>Eurotiomycetes</taxon>
        <taxon>Eurotiomycetidae</taxon>
        <taxon>Eurotiales</taxon>
        <taxon>Aspergillaceae</taxon>
        <taxon>Penicillium</taxon>
    </lineage>
</organism>
<reference key="1">
    <citation type="journal article" date="2017" name="Front. Microbiol.">
        <title>The biosynthetic gene cluster for andrastin A in Penicillium roqueforti.</title>
        <authorList>
            <person name="Rojas-Aedo J.F."/>
            <person name="Gil-Duran C."/>
            <person name="Del-Cid A."/>
            <person name="Valdes N."/>
            <person name="Alamos P."/>
            <person name="Vaca I."/>
            <person name="Garcia-Rico R.O."/>
            <person name="Levican G."/>
            <person name="Tello M."/>
            <person name="Chavez R."/>
        </authorList>
    </citation>
    <scope>NUCLEOTIDE SEQUENCE [GENOMIC DNA]</scope>
    <scope>IDENTIFICATION</scope>
    <scope>FUNCTION</scope>
    <scope>DISRUPTION PHENOTYPE</scope>
    <source>
        <strain>CECT 2905</strain>
    </source>
</reference>
<sequence length="336" mass="36698">MTQAQNYVIPPGSKVLVTGANGYIASHIVKALLDLGYLVRGTVRTPMPWLAEYFERQCGLGRFELIVVSDFQQPDAFDESVKGVSGVIHVAQGLPSSTAAETVKSATAYTVNGVINLFKAASTQRTIQRVVLTSSIVAAGYPTGKGFKLDADSWDESLEQASKDGTTVPIYRACKIEGERQAWKWVEKNQPHFELNSVLPWLTLGKILHPNIGGSTMGYVSGLLRGDTTPFKFLPLPWFVDVEDTARLHAIALLNPSVRSERLFATAAPFTWGDVIEILKRIQPNNARIPAAPIQEEPTLGDVVPAARAEKLLRETFGQLGWTPLEVSLESGIARE</sequence>
<accession>A0A1Y0BRF3</accession>
<evidence type="ECO:0000250" key="1">
    <source>
        <dbReference type="UniProtKB" id="A0A059TC02"/>
    </source>
</evidence>
<evidence type="ECO:0000250" key="2">
    <source>
        <dbReference type="UniProtKB" id="B6HV33"/>
    </source>
</evidence>
<evidence type="ECO:0000269" key="3">
    <source>
    </source>
</evidence>
<evidence type="ECO:0000303" key="4">
    <source>
    </source>
</evidence>
<evidence type="ECO:0000305" key="5"/>
<evidence type="ECO:0000305" key="6">
    <source>
    </source>
</evidence>
<gene>
    <name evidence="4" type="primary">adrE</name>
</gene>
<protein>
    <recommendedName>
        <fullName evidence="4">Ketoreductase adrE</fullName>
        <ecNumber evidence="6">1.1.1.-</ecNumber>
    </recommendedName>
    <alternativeName>
        <fullName evidence="4">Andrastin A biosynthesis cluster protein E</fullName>
    </alternativeName>
</protein>